<name>RFX3_HUMAN</name>
<keyword id="KW-0025">Alternative splicing</keyword>
<keyword id="KW-0217">Developmental protein</keyword>
<keyword id="KW-0221">Differentiation</keyword>
<keyword id="KW-0238">DNA-binding</keyword>
<keyword id="KW-0539">Nucleus</keyword>
<keyword id="KW-1267">Proteomics identification</keyword>
<keyword id="KW-1185">Reference proteome</keyword>
<keyword id="KW-0678">Repressor</keyword>
<keyword id="KW-0804">Transcription</keyword>
<keyword id="KW-0805">Transcription regulation</keyword>
<dbReference type="EMBL" id="X76092">
    <property type="protein sequence ID" value="CAA53706.1"/>
    <property type="molecule type" value="mRNA"/>
</dbReference>
<dbReference type="EMBL" id="AK289540">
    <property type="protein sequence ID" value="BAF82229.1"/>
    <property type="molecule type" value="mRNA"/>
</dbReference>
<dbReference type="EMBL" id="AL365202">
    <property type="status" value="NOT_ANNOTATED_CDS"/>
    <property type="molecule type" value="Genomic_DNA"/>
</dbReference>
<dbReference type="EMBL" id="AL133549">
    <property type="status" value="NOT_ANNOTATED_CDS"/>
    <property type="molecule type" value="Genomic_DNA"/>
</dbReference>
<dbReference type="EMBL" id="AL354941">
    <property type="status" value="NOT_ANNOTATED_CDS"/>
    <property type="molecule type" value="Genomic_DNA"/>
</dbReference>
<dbReference type="EMBL" id="CH471071">
    <property type="protein sequence ID" value="EAW58795.1"/>
    <property type="molecule type" value="Genomic_DNA"/>
</dbReference>
<dbReference type="EMBL" id="CH471071">
    <property type="protein sequence ID" value="EAW58796.1"/>
    <property type="molecule type" value="Genomic_DNA"/>
</dbReference>
<dbReference type="EMBL" id="CH471071">
    <property type="protein sequence ID" value="EAW58798.1"/>
    <property type="molecule type" value="Genomic_DNA"/>
</dbReference>
<dbReference type="EMBL" id="CH471071">
    <property type="protein sequence ID" value="EAW58799.1"/>
    <property type="molecule type" value="Genomic_DNA"/>
</dbReference>
<dbReference type="EMBL" id="BC022191">
    <property type="protein sequence ID" value="AAH22191.1"/>
    <property type="molecule type" value="mRNA"/>
</dbReference>
<dbReference type="EMBL" id="BC067778">
    <property type="protein sequence ID" value="AAH67778.1"/>
    <property type="molecule type" value="mRNA"/>
</dbReference>
<dbReference type="CCDS" id="CCDS6449.1">
    <molecule id="P48380-1"/>
</dbReference>
<dbReference type="CCDS" id="CCDS6450.1">
    <molecule id="P48380-2"/>
</dbReference>
<dbReference type="CCDS" id="CCDS75809.1">
    <molecule id="P48380-3"/>
</dbReference>
<dbReference type="PIR" id="D55926">
    <property type="entry name" value="D55926"/>
</dbReference>
<dbReference type="RefSeq" id="NP_001269045.1">
    <molecule id="P48380-1"/>
    <property type="nucleotide sequence ID" value="NM_001282116.2"/>
</dbReference>
<dbReference type="RefSeq" id="NP_001269046.1">
    <molecule id="P48380-3"/>
    <property type="nucleotide sequence ID" value="NM_001282117.2"/>
</dbReference>
<dbReference type="RefSeq" id="NP_002910.1">
    <molecule id="P48380-2"/>
    <property type="nucleotide sequence ID" value="NM_002919.4"/>
</dbReference>
<dbReference type="RefSeq" id="NP_602304.1">
    <molecule id="P48380-1"/>
    <property type="nucleotide sequence ID" value="NM_134428.3"/>
</dbReference>
<dbReference type="SMR" id="P48380"/>
<dbReference type="BioGRID" id="111923">
    <property type="interactions" value="45"/>
</dbReference>
<dbReference type="FunCoup" id="P48380">
    <property type="interactions" value="2526"/>
</dbReference>
<dbReference type="IntAct" id="P48380">
    <property type="interactions" value="24"/>
</dbReference>
<dbReference type="MINT" id="P48380"/>
<dbReference type="STRING" id="9606.ENSP00000371434"/>
<dbReference type="iPTMnet" id="P48380"/>
<dbReference type="PhosphoSitePlus" id="P48380"/>
<dbReference type="SwissPalm" id="P48380"/>
<dbReference type="BioMuta" id="RFX3"/>
<dbReference type="DMDM" id="32172437"/>
<dbReference type="jPOST" id="P48380"/>
<dbReference type="MassIVE" id="P48380"/>
<dbReference type="PaxDb" id="9606-ENSP00000371434"/>
<dbReference type="PeptideAtlas" id="P48380"/>
<dbReference type="ProteomicsDB" id="55883">
    <molecule id="P48380-1"/>
</dbReference>
<dbReference type="ProteomicsDB" id="55884">
    <molecule id="P48380-2"/>
</dbReference>
<dbReference type="ProteomicsDB" id="55885">
    <molecule id="P48380-3"/>
</dbReference>
<dbReference type="Pumba" id="P48380"/>
<dbReference type="Antibodypedia" id="23939">
    <property type="antibodies" value="246 antibodies from 32 providers"/>
</dbReference>
<dbReference type="DNASU" id="5991"/>
<dbReference type="Ensembl" id="ENST00000302303.5">
    <molecule id="P48380-3"/>
    <property type="protein sequence ID" value="ENSP00000303847.2"/>
    <property type="gene ID" value="ENSG00000080298.16"/>
</dbReference>
<dbReference type="Ensembl" id="ENST00000358730.6">
    <molecule id="P48380-2"/>
    <property type="protein sequence ID" value="ENSP00000351574.2"/>
    <property type="gene ID" value="ENSG00000080298.16"/>
</dbReference>
<dbReference type="Ensembl" id="ENST00000382004.7">
    <molecule id="P48380-1"/>
    <property type="protein sequence ID" value="ENSP00000371434.3"/>
    <property type="gene ID" value="ENSG00000080298.16"/>
</dbReference>
<dbReference type="Ensembl" id="ENST00000617270.5">
    <molecule id="P48380-1"/>
    <property type="protein sequence ID" value="ENSP00000482598.1"/>
    <property type="gene ID" value="ENSG00000080298.16"/>
</dbReference>
<dbReference type="GeneID" id="5991"/>
<dbReference type="KEGG" id="hsa:5991"/>
<dbReference type="MANE-Select" id="ENST00000617270.5">
    <property type="protein sequence ID" value="ENSP00000482598.1"/>
    <property type="RefSeq nucleotide sequence ID" value="NM_001282116.2"/>
    <property type="RefSeq protein sequence ID" value="NP_001269045.1"/>
</dbReference>
<dbReference type="UCSC" id="uc003zhr.5">
    <molecule id="P48380-1"/>
    <property type="organism name" value="human"/>
</dbReference>
<dbReference type="AGR" id="HGNC:9984"/>
<dbReference type="CTD" id="5991"/>
<dbReference type="DisGeNET" id="5991"/>
<dbReference type="GeneCards" id="RFX3"/>
<dbReference type="HGNC" id="HGNC:9984">
    <property type="gene designation" value="RFX3"/>
</dbReference>
<dbReference type="HPA" id="ENSG00000080298">
    <property type="expression patterns" value="Tissue enhanced (testis)"/>
</dbReference>
<dbReference type="MalaCards" id="RFX3"/>
<dbReference type="MIM" id="601337">
    <property type="type" value="gene"/>
</dbReference>
<dbReference type="neXtProt" id="NX_P48380"/>
<dbReference type="OpenTargets" id="ENSG00000080298"/>
<dbReference type="PharmGKB" id="PA34354"/>
<dbReference type="VEuPathDB" id="HostDB:ENSG00000080298"/>
<dbReference type="eggNOG" id="KOG3712">
    <property type="taxonomic scope" value="Eukaryota"/>
</dbReference>
<dbReference type="GeneTree" id="ENSGT01050000244879"/>
<dbReference type="HOGENOM" id="CLU_010393_1_1_1"/>
<dbReference type="InParanoid" id="P48380"/>
<dbReference type="OMA" id="FYRNSSM"/>
<dbReference type="OrthoDB" id="10056949at2759"/>
<dbReference type="PAN-GO" id="P48380">
    <property type="GO annotations" value="3 GO annotations based on evolutionary models"/>
</dbReference>
<dbReference type="PhylomeDB" id="P48380"/>
<dbReference type="TreeFam" id="TF321340"/>
<dbReference type="PathwayCommons" id="P48380"/>
<dbReference type="SignaLink" id="P48380"/>
<dbReference type="SIGNOR" id="P48380"/>
<dbReference type="BioGRID-ORCS" id="5991">
    <property type="hits" value="15 hits in 1179 CRISPR screens"/>
</dbReference>
<dbReference type="ChiTaRS" id="RFX3">
    <property type="organism name" value="human"/>
</dbReference>
<dbReference type="GeneWiki" id="RFX3"/>
<dbReference type="GenomeRNAi" id="5991"/>
<dbReference type="Pharos" id="P48380">
    <property type="development level" value="Tbio"/>
</dbReference>
<dbReference type="PRO" id="PR:P48380"/>
<dbReference type="Proteomes" id="UP000005640">
    <property type="component" value="Chromosome 9"/>
</dbReference>
<dbReference type="RNAct" id="P48380">
    <property type="molecule type" value="protein"/>
</dbReference>
<dbReference type="Bgee" id="ENSG00000080298">
    <property type="expression patterns" value="Expressed in bronchial epithelial cell and 178 other cell types or tissues"/>
</dbReference>
<dbReference type="ExpressionAtlas" id="P48380">
    <property type="expression patterns" value="baseline and differential"/>
</dbReference>
<dbReference type="GO" id="GO:0000785">
    <property type="term" value="C:chromatin"/>
    <property type="evidence" value="ECO:0000314"/>
    <property type="project" value="BHF-UCL"/>
</dbReference>
<dbReference type="GO" id="GO:0005576">
    <property type="term" value="C:extracellular region"/>
    <property type="evidence" value="ECO:0007669"/>
    <property type="project" value="GOC"/>
</dbReference>
<dbReference type="GO" id="GO:0005634">
    <property type="term" value="C:nucleus"/>
    <property type="evidence" value="ECO:0000314"/>
    <property type="project" value="UniProtKB"/>
</dbReference>
<dbReference type="GO" id="GO:0005667">
    <property type="term" value="C:transcription regulator complex"/>
    <property type="evidence" value="ECO:0000250"/>
    <property type="project" value="BHF-UCL"/>
</dbReference>
<dbReference type="GO" id="GO:0003677">
    <property type="term" value="F:DNA binding"/>
    <property type="evidence" value="ECO:0000304"/>
    <property type="project" value="ProtInc"/>
</dbReference>
<dbReference type="GO" id="GO:0003700">
    <property type="term" value="F:DNA-binding transcription factor activity"/>
    <property type="evidence" value="ECO:0000250"/>
    <property type="project" value="ARUK-UCL"/>
</dbReference>
<dbReference type="GO" id="GO:0000981">
    <property type="term" value="F:DNA-binding transcription factor activity, RNA polymerase II-specific"/>
    <property type="evidence" value="ECO:0000247"/>
    <property type="project" value="NTNU_SB"/>
</dbReference>
<dbReference type="GO" id="GO:0000978">
    <property type="term" value="F:RNA polymerase II cis-regulatory region sequence-specific DNA binding"/>
    <property type="evidence" value="ECO:0000318"/>
    <property type="project" value="GO_Central"/>
</dbReference>
<dbReference type="GO" id="GO:1990837">
    <property type="term" value="F:sequence-specific double-stranded DNA binding"/>
    <property type="evidence" value="ECO:0000314"/>
    <property type="project" value="ARUK-UCL"/>
</dbReference>
<dbReference type="GO" id="GO:0000976">
    <property type="term" value="F:transcription cis-regulatory region binding"/>
    <property type="evidence" value="ECO:0000314"/>
    <property type="project" value="UniProtKB"/>
</dbReference>
<dbReference type="GO" id="GO:0048469">
    <property type="term" value="P:cell maturation"/>
    <property type="evidence" value="ECO:0000250"/>
    <property type="project" value="BHF-UCL"/>
</dbReference>
<dbReference type="GO" id="GO:0060271">
    <property type="term" value="P:cilium assembly"/>
    <property type="evidence" value="ECO:0000250"/>
    <property type="project" value="BHF-UCL"/>
</dbReference>
<dbReference type="GO" id="GO:0060285">
    <property type="term" value="P:cilium-dependent cell motility"/>
    <property type="evidence" value="ECO:0000250"/>
    <property type="project" value="UniProtKB"/>
</dbReference>
<dbReference type="GO" id="GO:0006351">
    <property type="term" value="P:DNA-templated transcription"/>
    <property type="evidence" value="ECO:0007669"/>
    <property type="project" value="Ensembl"/>
</dbReference>
<dbReference type="GO" id="GO:0031018">
    <property type="term" value="P:endocrine pancreas development"/>
    <property type="evidence" value="ECO:0000250"/>
    <property type="project" value="UniProtKB"/>
</dbReference>
<dbReference type="GO" id="GO:0060287">
    <property type="term" value="P:epithelial cilium movement involved in determination of left/right asymmetry"/>
    <property type="evidence" value="ECO:0000250"/>
    <property type="project" value="UniProtKB"/>
</dbReference>
<dbReference type="GO" id="GO:0045892">
    <property type="term" value="P:negative regulation of DNA-templated transcription"/>
    <property type="evidence" value="ECO:0000314"/>
    <property type="project" value="UniProtKB"/>
</dbReference>
<dbReference type="GO" id="GO:0045893">
    <property type="term" value="P:positive regulation of DNA-templated transcription"/>
    <property type="evidence" value="ECO:0000314"/>
    <property type="project" value="UniProtKB"/>
</dbReference>
<dbReference type="GO" id="GO:0045944">
    <property type="term" value="P:positive regulation of transcription by RNA polymerase II"/>
    <property type="evidence" value="ECO:0000250"/>
    <property type="project" value="BHF-UCL"/>
</dbReference>
<dbReference type="GO" id="GO:2000078">
    <property type="term" value="P:positive regulation of type B pancreatic cell development"/>
    <property type="evidence" value="ECO:0000250"/>
    <property type="project" value="BHF-UCL"/>
</dbReference>
<dbReference type="GO" id="GO:0006355">
    <property type="term" value="P:regulation of DNA-templated transcription"/>
    <property type="evidence" value="ECO:0000250"/>
    <property type="project" value="UniProtKB"/>
</dbReference>
<dbReference type="GO" id="GO:0050796">
    <property type="term" value="P:regulation of insulin secretion"/>
    <property type="evidence" value="ECO:0000250"/>
    <property type="project" value="UniProtKB"/>
</dbReference>
<dbReference type="GO" id="GO:0006357">
    <property type="term" value="P:regulation of transcription by RNA polymerase II"/>
    <property type="evidence" value="ECO:0000318"/>
    <property type="project" value="GO_Central"/>
</dbReference>
<dbReference type="GO" id="GO:0072560">
    <property type="term" value="P:type B pancreatic cell maturation"/>
    <property type="evidence" value="ECO:0007669"/>
    <property type="project" value="Ensembl"/>
</dbReference>
<dbReference type="FunFam" id="1.10.10.10:FF:000017">
    <property type="entry name" value="transcription factor RFX3 isoform X1"/>
    <property type="match status" value="1"/>
</dbReference>
<dbReference type="Gene3D" id="1.10.10.10">
    <property type="entry name" value="Winged helix-like DNA-binding domain superfamily/Winged helix DNA-binding domain"/>
    <property type="match status" value="1"/>
</dbReference>
<dbReference type="InterPro" id="IPR003150">
    <property type="entry name" value="DNA-bd_RFX"/>
</dbReference>
<dbReference type="InterPro" id="IPR039779">
    <property type="entry name" value="RFX-like"/>
</dbReference>
<dbReference type="InterPro" id="IPR007668">
    <property type="entry name" value="RFX1_trans_act"/>
</dbReference>
<dbReference type="InterPro" id="IPR036388">
    <property type="entry name" value="WH-like_DNA-bd_sf"/>
</dbReference>
<dbReference type="InterPro" id="IPR036390">
    <property type="entry name" value="WH_DNA-bd_sf"/>
</dbReference>
<dbReference type="PANTHER" id="PTHR12619">
    <property type="entry name" value="RFX TRANSCRIPTION FACTOR FAMILY"/>
    <property type="match status" value="1"/>
</dbReference>
<dbReference type="PANTHER" id="PTHR12619:SF20">
    <property type="entry name" value="TRANSCRIPTION FACTOR RFX3"/>
    <property type="match status" value="1"/>
</dbReference>
<dbReference type="Pfam" id="PF25340">
    <property type="entry name" value="BCD_RFX"/>
    <property type="match status" value="1"/>
</dbReference>
<dbReference type="Pfam" id="PF04589">
    <property type="entry name" value="RFX1_trans_act"/>
    <property type="match status" value="1"/>
</dbReference>
<dbReference type="Pfam" id="PF02257">
    <property type="entry name" value="RFX_DNA_binding"/>
    <property type="match status" value="1"/>
</dbReference>
<dbReference type="SUPFAM" id="SSF46785">
    <property type="entry name" value="Winged helix' DNA-binding domain"/>
    <property type="match status" value="1"/>
</dbReference>
<dbReference type="PROSITE" id="PS51526">
    <property type="entry name" value="RFX_DBD"/>
    <property type="match status" value="1"/>
</dbReference>
<comment type="function">
    <text evidence="1 5 6">Transcription factor required for ciliogenesis and islet cell differentiation during endocrine pancreas development. Essential for the differentiation of nodal monocilia and left-right asymmetry specification during embryogenesis. Required for the biogenesis of motile cilia by governing growth and beating efficiency of motile cells. Also required for ciliated ependymal cell differentiation. Regulates the expression of genes involved in ciliary assembly (DYNC2LI1, FOXJ1 and BBS4) and genes involved in ciliary motility (DNAH11, DNAH9 and DNAH5) (By similarity). Together with RFX6, participates in the differentiation of 4 of the 5 islet cell types during endocrine pancreas development, with the exception of pancreatic PP (polypeptide-producing) cells. Regulates transcription by forming a heterodimer with another RFX protein and binding to the X-box in the promoter of target genes (PubMed:20148032). Represses transcription of MAP1A in non-neuronal cells but not in neuronal cells (PubMed:12411430).</text>
</comment>
<comment type="subunit">
    <text evidence="4 6">Heterodimer; heterodimerizes with RFX1 and RFX2, and RFX6.</text>
</comment>
<comment type="interaction">
    <interactant intactId="EBI-742557">
        <id>P48380</id>
    </interactant>
    <interactant intactId="EBI-701903">
        <id>Q14192</id>
        <label>FHL2</label>
    </interactant>
    <organismsDiffer>false</organismsDiffer>
    <experiments>12</experiments>
</comment>
<comment type="interaction">
    <interactant intactId="EBI-742557">
        <id>P48380</id>
    </interactant>
    <interactant intactId="EBI-741101">
        <id>Q13643</id>
        <label>FHL3</label>
    </interactant>
    <organismsDiffer>false</organismsDiffer>
    <experiments>4</experiments>
</comment>
<comment type="interaction">
    <interactant intactId="EBI-742557">
        <id>P48380</id>
    </interactant>
    <interactant intactId="EBI-16439278">
        <id>Q6FHY5</id>
        <label>MEOX2</label>
    </interactant>
    <organismsDiffer>false</organismsDiffer>
    <experiments>3</experiments>
</comment>
<comment type="interaction">
    <interactant intactId="EBI-742557">
        <id>P48380</id>
    </interactant>
    <interactant intactId="EBI-355744">
        <id>Q12933</id>
        <label>TRAF2</label>
    </interactant>
    <organismsDiffer>false</organismsDiffer>
    <experiments>5</experiments>
</comment>
<comment type="interaction">
    <interactant intactId="EBI-742557">
        <id>P48380</id>
    </interactant>
    <interactant intactId="EBI-742327">
        <id>Q15654</id>
        <label>TRIP6</label>
    </interactant>
    <organismsDiffer>false</organismsDiffer>
    <experiments>3</experiments>
</comment>
<comment type="subcellular location">
    <subcellularLocation>
        <location evidence="7 10">Nucleus</location>
    </subcellularLocation>
</comment>
<comment type="alternative products">
    <event type="alternative splicing"/>
    <isoform>
        <id>P48380-1</id>
        <name>1</name>
        <sequence type="displayed"/>
    </isoform>
    <isoform>
        <id>P48380-2</id>
        <name>2</name>
        <sequence type="described" ref="VSP_007626 VSP_007627"/>
    </isoform>
    <isoform>
        <id>P48380-3</id>
        <name>3</name>
        <sequence type="described" ref="VSP_015162 VSP_015163"/>
    </isoform>
</comment>
<comment type="similarity">
    <text evidence="2">Belongs to the RFX family.</text>
</comment>
<accession>P48380</accession>
<accession>A8K0H5</accession>
<accession>D3DRH8</accession>
<accession>D3DRH9</accession>
<accession>Q5JTL7</accession>
<accession>Q5JTL8</accession>
<accession>Q6NW13</accession>
<accession>Q8WTU4</accession>
<accession>Q95HL5</accession>
<accession>Q95HL6</accession>
<protein>
    <recommendedName>
        <fullName>Transcription factor RFX3</fullName>
    </recommendedName>
    <alternativeName>
        <fullName>Regulatory factor X 3</fullName>
    </alternativeName>
</protein>
<reference key="1">
    <citation type="journal article" date="1994" name="Mol. Cell. Biol.">
        <title>RFX1, a transactivator of hepatitis B virus enhancer I, belongs to a novel family of homodimeric and heterodimeric DNA-binding proteins.</title>
        <authorList>
            <person name="Reith W."/>
            <person name="Ucla C."/>
            <person name="Barras E."/>
            <person name="Gaud A."/>
            <person name="Durand B."/>
            <person name="Herrero-Sanchez C."/>
            <person name="Kobr M."/>
            <person name="Mach B."/>
        </authorList>
    </citation>
    <scope>NUCLEOTIDE SEQUENCE [MRNA] (ISOFORM 2)</scope>
</reference>
<reference key="2">
    <citation type="journal article" date="2004" name="Nat. Genet.">
        <title>Complete sequencing and characterization of 21,243 full-length human cDNAs.</title>
        <authorList>
            <person name="Ota T."/>
            <person name="Suzuki Y."/>
            <person name="Nishikawa T."/>
            <person name="Otsuki T."/>
            <person name="Sugiyama T."/>
            <person name="Irie R."/>
            <person name="Wakamatsu A."/>
            <person name="Hayashi K."/>
            <person name="Sato H."/>
            <person name="Nagai K."/>
            <person name="Kimura K."/>
            <person name="Makita H."/>
            <person name="Sekine M."/>
            <person name="Obayashi M."/>
            <person name="Nishi T."/>
            <person name="Shibahara T."/>
            <person name="Tanaka T."/>
            <person name="Ishii S."/>
            <person name="Yamamoto J."/>
            <person name="Saito K."/>
            <person name="Kawai Y."/>
            <person name="Isono Y."/>
            <person name="Nakamura Y."/>
            <person name="Nagahari K."/>
            <person name="Murakami K."/>
            <person name="Yasuda T."/>
            <person name="Iwayanagi T."/>
            <person name="Wagatsuma M."/>
            <person name="Shiratori A."/>
            <person name="Sudo H."/>
            <person name="Hosoiri T."/>
            <person name="Kaku Y."/>
            <person name="Kodaira H."/>
            <person name="Kondo H."/>
            <person name="Sugawara M."/>
            <person name="Takahashi M."/>
            <person name="Kanda K."/>
            <person name="Yokoi T."/>
            <person name="Furuya T."/>
            <person name="Kikkawa E."/>
            <person name="Omura Y."/>
            <person name="Abe K."/>
            <person name="Kamihara K."/>
            <person name="Katsuta N."/>
            <person name="Sato K."/>
            <person name="Tanikawa M."/>
            <person name="Yamazaki M."/>
            <person name="Ninomiya K."/>
            <person name="Ishibashi T."/>
            <person name="Yamashita H."/>
            <person name="Murakawa K."/>
            <person name="Fujimori K."/>
            <person name="Tanai H."/>
            <person name="Kimata M."/>
            <person name="Watanabe M."/>
            <person name="Hiraoka S."/>
            <person name="Chiba Y."/>
            <person name="Ishida S."/>
            <person name="Ono Y."/>
            <person name="Takiguchi S."/>
            <person name="Watanabe S."/>
            <person name="Yosida M."/>
            <person name="Hotuta T."/>
            <person name="Kusano J."/>
            <person name="Kanehori K."/>
            <person name="Takahashi-Fujii A."/>
            <person name="Hara H."/>
            <person name="Tanase T.-O."/>
            <person name="Nomura Y."/>
            <person name="Togiya S."/>
            <person name="Komai F."/>
            <person name="Hara R."/>
            <person name="Takeuchi K."/>
            <person name="Arita M."/>
            <person name="Imose N."/>
            <person name="Musashino K."/>
            <person name="Yuuki H."/>
            <person name="Oshima A."/>
            <person name="Sasaki N."/>
            <person name="Aotsuka S."/>
            <person name="Yoshikawa Y."/>
            <person name="Matsunawa H."/>
            <person name="Ichihara T."/>
            <person name="Shiohata N."/>
            <person name="Sano S."/>
            <person name="Moriya S."/>
            <person name="Momiyama H."/>
            <person name="Satoh N."/>
            <person name="Takami S."/>
            <person name="Terashima Y."/>
            <person name="Suzuki O."/>
            <person name="Nakagawa S."/>
            <person name="Senoh A."/>
            <person name="Mizoguchi H."/>
            <person name="Goto Y."/>
            <person name="Shimizu F."/>
            <person name="Wakebe H."/>
            <person name="Hishigaki H."/>
            <person name="Watanabe T."/>
            <person name="Sugiyama A."/>
            <person name="Takemoto M."/>
            <person name="Kawakami B."/>
            <person name="Yamazaki M."/>
            <person name="Watanabe K."/>
            <person name="Kumagai A."/>
            <person name="Itakura S."/>
            <person name="Fukuzumi Y."/>
            <person name="Fujimori Y."/>
            <person name="Komiyama M."/>
            <person name="Tashiro H."/>
            <person name="Tanigami A."/>
            <person name="Fujiwara T."/>
            <person name="Ono T."/>
            <person name="Yamada K."/>
            <person name="Fujii Y."/>
            <person name="Ozaki K."/>
            <person name="Hirao M."/>
            <person name="Ohmori Y."/>
            <person name="Kawabata A."/>
            <person name="Hikiji T."/>
            <person name="Kobatake N."/>
            <person name="Inagaki H."/>
            <person name="Ikema Y."/>
            <person name="Okamoto S."/>
            <person name="Okitani R."/>
            <person name="Kawakami T."/>
            <person name="Noguchi S."/>
            <person name="Itoh T."/>
            <person name="Shigeta K."/>
            <person name="Senba T."/>
            <person name="Matsumura K."/>
            <person name="Nakajima Y."/>
            <person name="Mizuno T."/>
            <person name="Morinaga M."/>
            <person name="Sasaki M."/>
            <person name="Togashi T."/>
            <person name="Oyama M."/>
            <person name="Hata H."/>
            <person name="Watanabe M."/>
            <person name="Komatsu T."/>
            <person name="Mizushima-Sugano J."/>
            <person name="Satoh T."/>
            <person name="Shirai Y."/>
            <person name="Takahashi Y."/>
            <person name="Nakagawa K."/>
            <person name="Okumura K."/>
            <person name="Nagase T."/>
            <person name="Nomura N."/>
            <person name="Kikuchi H."/>
            <person name="Masuho Y."/>
            <person name="Yamashita R."/>
            <person name="Nakai K."/>
            <person name="Yada T."/>
            <person name="Nakamura Y."/>
            <person name="Ohara O."/>
            <person name="Isogai T."/>
            <person name="Sugano S."/>
        </authorList>
    </citation>
    <scope>NUCLEOTIDE SEQUENCE [LARGE SCALE MRNA] (ISOFORM 1)</scope>
    <source>
        <tissue>Cerebellum</tissue>
    </source>
</reference>
<reference key="3">
    <citation type="journal article" date="2004" name="Nature">
        <title>DNA sequence and analysis of human chromosome 9.</title>
        <authorList>
            <person name="Humphray S.J."/>
            <person name="Oliver K."/>
            <person name="Hunt A.R."/>
            <person name="Plumb R.W."/>
            <person name="Loveland J.E."/>
            <person name="Howe K.L."/>
            <person name="Andrews T.D."/>
            <person name="Searle S."/>
            <person name="Hunt S.E."/>
            <person name="Scott C.E."/>
            <person name="Jones M.C."/>
            <person name="Ainscough R."/>
            <person name="Almeida J.P."/>
            <person name="Ambrose K.D."/>
            <person name="Ashwell R.I.S."/>
            <person name="Babbage A.K."/>
            <person name="Babbage S."/>
            <person name="Bagguley C.L."/>
            <person name="Bailey J."/>
            <person name="Banerjee R."/>
            <person name="Barker D.J."/>
            <person name="Barlow K.F."/>
            <person name="Bates K."/>
            <person name="Beasley H."/>
            <person name="Beasley O."/>
            <person name="Bird C.P."/>
            <person name="Bray-Allen S."/>
            <person name="Brown A.J."/>
            <person name="Brown J.Y."/>
            <person name="Burford D."/>
            <person name="Burrill W."/>
            <person name="Burton J."/>
            <person name="Carder C."/>
            <person name="Carter N.P."/>
            <person name="Chapman J.C."/>
            <person name="Chen Y."/>
            <person name="Clarke G."/>
            <person name="Clark S.Y."/>
            <person name="Clee C.M."/>
            <person name="Clegg S."/>
            <person name="Collier R.E."/>
            <person name="Corby N."/>
            <person name="Crosier M."/>
            <person name="Cummings A.T."/>
            <person name="Davies J."/>
            <person name="Dhami P."/>
            <person name="Dunn M."/>
            <person name="Dutta I."/>
            <person name="Dyer L.W."/>
            <person name="Earthrowl M.E."/>
            <person name="Faulkner L."/>
            <person name="Fleming C.J."/>
            <person name="Frankish A."/>
            <person name="Frankland J.A."/>
            <person name="French L."/>
            <person name="Fricker D.G."/>
            <person name="Garner P."/>
            <person name="Garnett J."/>
            <person name="Ghori J."/>
            <person name="Gilbert J.G.R."/>
            <person name="Glison C."/>
            <person name="Grafham D.V."/>
            <person name="Gribble S."/>
            <person name="Griffiths C."/>
            <person name="Griffiths-Jones S."/>
            <person name="Grocock R."/>
            <person name="Guy J."/>
            <person name="Hall R.E."/>
            <person name="Hammond S."/>
            <person name="Harley J.L."/>
            <person name="Harrison E.S.I."/>
            <person name="Hart E.A."/>
            <person name="Heath P.D."/>
            <person name="Henderson C.D."/>
            <person name="Hopkins B.L."/>
            <person name="Howard P.J."/>
            <person name="Howden P.J."/>
            <person name="Huckle E."/>
            <person name="Johnson C."/>
            <person name="Johnson D."/>
            <person name="Joy A.A."/>
            <person name="Kay M."/>
            <person name="Keenan S."/>
            <person name="Kershaw J.K."/>
            <person name="Kimberley A.M."/>
            <person name="King A."/>
            <person name="Knights A."/>
            <person name="Laird G.K."/>
            <person name="Langford C."/>
            <person name="Lawlor S."/>
            <person name="Leongamornlert D.A."/>
            <person name="Leversha M."/>
            <person name="Lloyd C."/>
            <person name="Lloyd D.M."/>
            <person name="Lovell J."/>
            <person name="Martin S."/>
            <person name="Mashreghi-Mohammadi M."/>
            <person name="Matthews L."/>
            <person name="McLaren S."/>
            <person name="McLay K.E."/>
            <person name="McMurray A."/>
            <person name="Milne S."/>
            <person name="Nickerson T."/>
            <person name="Nisbett J."/>
            <person name="Nordsiek G."/>
            <person name="Pearce A.V."/>
            <person name="Peck A.I."/>
            <person name="Porter K.M."/>
            <person name="Pandian R."/>
            <person name="Pelan S."/>
            <person name="Phillimore B."/>
            <person name="Povey S."/>
            <person name="Ramsey Y."/>
            <person name="Rand V."/>
            <person name="Scharfe M."/>
            <person name="Sehra H.K."/>
            <person name="Shownkeen R."/>
            <person name="Sims S.K."/>
            <person name="Skuce C.D."/>
            <person name="Smith M."/>
            <person name="Steward C.A."/>
            <person name="Swarbreck D."/>
            <person name="Sycamore N."/>
            <person name="Tester J."/>
            <person name="Thorpe A."/>
            <person name="Tracey A."/>
            <person name="Tromans A."/>
            <person name="Thomas D.W."/>
            <person name="Wall M."/>
            <person name="Wallis J.M."/>
            <person name="West A.P."/>
            <person name="Whitehead S.L."/>
            <person name="Willey D.L."/>
            <person name="Williams S.A."/>
            <person name="Wilming L."/>
            <person name="Wray P.W."/>
            <person name="Young L."/>
            <person name="Ashurst J.L."/>
            <person name="Coulson A."/>
            <person name="Blocker H."/>
            <person name="Durbin R.M."/>
            <person name="Sulston J.E."/>
            <person name="Hubbard T."/>
            <person name="Jackson M.J."/>
            <person name="Bentley D.R."/>
            <person name="Beck S."/>
            <person name="Rogers J."/>
            <person name="Dunham I."/>
        </authorList>
    </citation>
    <scope>NUCLEOTIDE SEQUENCE [LARGE SCALE GENOMIC DNA]</scope>
</reference>
<reference key="4">
    <citation type="submission" date="2005-09" db="EMBL/GenBank/DDBJ databases">
        <authorList>
            <person name="Mural R.J."/>
            <person name="Istrail S."/>
            <person name="Sutton G.G."/>
            <person name="Florea L."/>
            <person name="Halpern A.L."/>
            <person name="Mobarry C.M."/>
            <person name="Lippert R."/>
            <person name="Walenz B."/>
            <person name="Shatkay H."/>
            <person name="Dew I."/>
            <person name="Miller J.R."/>
            <person name="Flanigan M.J."/>
            <person name="Edwards N.J."/>
            <person name="Bolanos R."/>
            <person name="Fasulo D."/>
            <person name="Halldorsson B.V."/>
            <person name="Hannenhalli S."/>
            <person name="Turner R."/>
            <person name="Yooseph S."/>
            <person name="Lu F."/>
            <person name="Nusskern D.R."/>
            <person name="Shue B.C."/>
            <person name="Zheng X.H."/>
            <person name="Zhong F."/>
            <person name="Delcher A.L."/>
            <person name="Huson D.H."/>
            <person name="Kravitz S.A."/>
            <person name="Mouchard L."/>
            <person name="Reinert K."/>
            <person name="Remington K.A."/>
            <person name="Clark A.G."/>
            <person name="Waterman M.S."/>
            <person name="Eichler E.E."/>
            <person name="Adams M.D."/>
            <person name="Hunkapiller M.W."/>
            <person name="Myers E.W."/>
            <person name="Venter J.C."/>
        </authorList>
    </citation>
    <scope>NUCLEOTIDE SEQUENCE [LARGE SCALE GENOMIC DNA]</scope>
</reference>
<reference key="5">
    <citation type="journal article" date="2004" name="Genome Res.">
        <title>The status, quality, and expansion of the NIH full-length cDNA project: the Mammalian Gene Collection (MGC).</title>
        <authorList>
            <consortium name="The MGC Project Team"/>
        </authorList>
    </citation>
    <scope>NUCLEOTIDE SEQUENCE [LARGE SCALE MRNA] (ISOFORMS 1 AND 3)</scope>
    <source>
        <tissue>Muscle</tissue>
        <tissue>Testis</tissue>
    </source>
</reference>
<reference key="6">
    <citation type="journal article" date="1999" name="Mol. Cell. Biol.">
        <title>Dimeric RFX proteins contribute to the activity and lineage specificity of the interleukin-5 receptor alpha promoter through activation and repression domains.</title>
        <authorList>
            <person name="Iwama A."/>
            <person name="Pan J."/>
            <person name="Zhang P."/>
            <person name="Reith W."/>
            <person name="Mach B."/>
            <person name="Tenen D.G."/>
            <person name="Sun Z."/>
        </authorList>
    </citation>
    <scope>SUBUNIT</scope>
</reference>
<reference key="7">
    <citation type="journal article" date="2003" name="J. Biol. Chem.">
        <title>Role for RFX transcription factors in non-neuronal cell-specific inactivation of the microtubule-associated protein MAP1A promoter.</title>
        <authorList>
            <person name="Nakayama A."/>
            <person name="Murakami H."/>
            <person name="Maeyama N."/>
            <person name="Yamashiro N."/>
            <person name="Sakakibara A."/>
            <person name="Mori N."/>
            <person name="Takahashi M."/>
        </authorList>
    </citation>
    <scope>FUNCTION</scope>
</reference>
<reference key="8">
    <citation type="journal article" date="2010" name="Nature">
        <title>Rfx6 directs islet formation and insulin production in mice and humans.</title>
        <authorList>
            <person name="Smith S.B."/>
            <person name="Qu H.Q."/>
            <person name="Taleb N."/>
            <person name="Kishimoto N.Y."/>
            <person name="Scheel D.W."/>
            <person name="Lu Y."/>
            <person name="Patch A.M."/>
            <person name="Grabs R."/>
            <person name="Wang J."/>
            <person name="Lynn F.C."/>
            <person name="Miyatsuka T."/>
            <person name="Mitchell J."/>
            <person name="Seerke R."/>
            <person name="Desir J."/>
            <person name="Eijnden S.V."/>
            <person name="Abramowicz M."/>
            <person name="Kacet N."/>
            <person name="Weill J."/>
            <person name="Renard M.E."/>
            <person name="Gentile M."/>
            <person name="Hansen I."/>
            <person name="Dewar K."/>
            <person name="Hattersley A.T."/>
            <person name="Wang R."/>
            <person name="Wilson M.E."/>
            <person name="Johnson J.D."/>
            <person name="Polychronakos C."/>
            <person name="German M.S."/>
        </authorList>
    </citation>
    <scope>FUNCTION</scope>
    <scope>DNA-BINDING</scope>
    <scope>INTERACTION WITH RFX6</scope>
</reference>
<reference key="9">
    <citation type="journal article" date="2019" name="J. Proteome Res.">
        <title>Cell Type-Specific Expression of Testis Elevated Genes Based on Transcriptomics and Antibody-Based Proteomics.</title>
        <authorList>
            <person name="Pineau C."/>
            <person name="Hikmet F."/>
            <person name="Zhang C."/>
            <person name="Oksvold P."/>
            <person name="Chen S."/>
            <person name="Fagerberg L."/>
            <person name="Uhlen M."/>
            <person name="Lindskog C."/>
        </authorList>
    </citation>
    <scope>SUBCELLULAR LOCATION</scope>
</reference>
<feature type="chain" id="PRO_0000215290" description="Transcription factor RFX3">
    <location>
        <begin position="1"/>
        <end position="749"/>
    </location>
</feature>
<feature type="DNA-binding region" description="RFX-type winged-helix" evidence="2">
    <location>
        <begin position="183"/>
        <end position="258"/>
    </location>
</feature>
<feature type="region of interest" description="Disordered" evidence="3">
    <location>
        <begin position="663"/>
        <end position="699"/>
    </location>
</feature>
<feature type="compositionally biased region" description="Acidic residues" evidence="3">
    <location>
        <begin position="674"/>
        <end position="688"/>
    </location>
</feature>
<feature type="splice variant" id="VSP_015162" description="In isoform 3." evidence="8">
    <original>SNLSEIESRLPKA</original>
    <variation>RSESTSFPIHFHG</variation>
    <location>
        <begin position="401"/>
        <end position="413"/>
    </location>
</feature>
<feature type="splice variant" id="VSP_015163" description="In isoform 3." evidence="8">
    <location>
        <begin position="414"/>
        <end position="749"/>
    </location>
</feature>
<feature type="splice variant" id="VSP_007626" description="In isoform 2." evidence="9">
    <original>FGDLNAVSPGNLDKDEGSEVESEMDEELDDSSEPQAKREKTELSQAFPVGC</original>
    <variation>VREAERAVTHWVIKNKPELHFSLNTLLIKTMVPNQVSLRARRDCGVIARVP</variation>
    <location>
        <begin position="657"/>
        <end position="707"/>
    </location>
</feature>
<feature type="splice variant" id="VSP_007627" description="In isoform 2." evidence="9">
    <location>
        <begin position="708"/>
        <end position="749"/>
    </location>
</feature>
<feature type="sequence conflict" description="In Ref. 2; BAF82229." evidence="10" ref="2">
    <original>H</original>
    <variation>P</variation>
    <location>
        <position position="150"/>
    </location>
</feature>
<feature type="sequence conflict" description="In Ref. 5; AAH67778." evidence="10" ref="5">
    <original>E</original>
    <variation>G</variation>
    <location>
        <position position="310"/>
    </location>
</feature>
<evidence type="ECO:0000250" key="1">
    <source>
        <dbReference type="UniProtKB" id="P48381"/>
    </source>
</evidence>
<evidence type="ECO:0000255" key="2">
    <source>
        <dbReference type="PROSITE-ProRule" id="PRU00858"/>
    </source>
</evidence>
<evidence type="ECO:0000256" key="3">
    <source>
        <dbReference type="SAM" id="MobiDB-lite"/>
    </source>
</evidence>
<evidence type="ECO:0000269" key="4">
    <source>
    </source>
</evidence>
<evidence type="ECO:0000269" key="5">
    <source>
    </source>
</evidence>
<evidence type="ECO:0000269" key="6">
    <source>
    </source>
</evidence>
<evidence type="ECO:0000269" key="7">
    <source>
    </source>
</evidence>
<evidence type="ECO:0000303" key="8">
    <source>
    </source>
</evidence>
<evidence type="ECO:0000303" key="9">
    <source>
    </source>
</evidence>
<evidence type="ECO:0000305" key="10"/>
<sequence>MQTSETGSDTGSTVTLQTSVASQAAVPTQVVQQVPVQQQVQQVQTVQQVQHVYPAQVQYVEGSDTVYTNGAIRTTTYPYTETQMYSQNTGGNYFDTQGSSAQVTTVVSSHSMVGTGGIQMGVTGGQLISSSGGTYLIGNSMENSGHSVTHTTRASPATIEMAIETLQKSDGLSTHRSSLLNSHLQWLLDNYETAEGVSLPRSTLYNHYLRHCQEHKLDPVNAASFGKLIRSIFMGLRTRRLGTRGNSKYHYYGIRVKPDSPLNRLQEDMQYMAMRQQPMQQKQRYKPMQKVDGVADGFTGSGQQTGTSVEQTVIAQSQHHQQFLDASRALPEFGEVEISSLPDGTTFEDIKSLQSLYREHCEAILDVVVNLQFSLIEKLWQTFWRYSPSTPTDGTTITESSNLSEIESRLPKAKLITLCKHESILKWMCNCDHGMYQALVEILIPDVLRPIPSALTQAIRNFAKSLEGWLSNAMNNIPQRMIQTKVAAVSAFAQTLRRYTSLNHLAQAARAVLQNTSQINQMLSDLNRVDFANVQEQASWVCQCDDNMVQRLETDFKMTLQQQSTLEQWAAWLDNVMMQALKPYEGRPSFPKAARQFLLKWSFYSSMVIRDLTLRSAASFGSFHLIRLLYDEYMFYLVEHRVAQATGETPIAVMGEFGDLNAVSPGNLDKDEGSEVESEMDEELDDSSEPQAKREKTELSQAFPVGCMQPVLETGVQPSLLNPIHSEHIVTSTQTIRQCSATGNTYTAV</sequence>
<proteinExistence type="evidence at protein level"/>
<organism>
    <name type="scientific">Homo sapiens</name>
    <name type="common">Human</name>
    <dbReference type="NCBI Taxonomy" id="9606"/>
    <lineage>
        <taxon>Eukaryota</taxon>
        <taxon>Metazoa</taxon>
        <taxon>Chordata</taxon>
        <taxon>Craniata</taxon>
        <taxon>Vertebrata</taxon>
        <taxon>Euteleostomi</taxon>
        <taxon>Mammalia</taxon>
        <taxon>Eutheria</taxon>
        <taxon>Euarchontoglires</taxon>
        <taxon>Primates</taxon>
        <taxon>Haplorrhini</taxon>
        <taxon>Catarrhini</taxon>
        <taxon>Hominidae</taxon>
        <taxon>Homo</taxon>
    </lineage>
</organism>
<gene>
    <name type="primary">RFX3</name>
</gene>